<protein>
    <recommendedName>
        <fullName>Indole-3-glycerol phosphate synthase 2</fullName>
        <shortName>IGPS 2</shortName>
        <ecNumber>4.1.1.48</ecNumber>
    </recommendedName>
</protein>
<geneLocation type="plasmid">
    <name>megaplasmid Rsp</name>
</geneLocation>
<name>TRPC2_RALN1</name>
<evidence type="ECO:0000305" key="1"/>
<keyword id="KW-0028">Amino-acid biosynthesis</keyword>
<keyword id="KW-0057">Aromatic amino acid biosynthesis</keyword>
<keyword id="KW-0210">Decarboxylase</keyword>
<keyword id="KW-0456">Lyase</keyword>
<keyword id="KW-0614">Plasmid</keyword>
<keyword id="KW-1185">Reference proteome</keyword>
<keyword id="KW-0822">Tryptophan biosynthesis</keyword>
<dbReference type="EC" id="4.1.1.48"/>
<dbReference type="EMBL" id="AL646053">
    <property type="protein sequence ID" value="CAD17831.1"/>
    <property type="molecule type" value="Genomic_DNA"/>
</dbReference>
<dbReference type="SMR" id="Q8XS01"/>
<dbReference type="STRING" id="267608.RSp0680"/>
<dbReference type="EnsemblBacteria" id="CAD17831">
    <property type="protein sequence ID" value="CAD17831"/>
    <property type="gene ID" value="RSp0680"/>
</dbReference>
<dbReference type="KEGG" id="rso:RSp0680"/>
<dbReference type="eggNOG" id="COG0134">
    <property type="taxonomic scope" value="Bacteria"/>
</dbReference>
<dbReference type="HOGENOM" id="CLU_034247_2_0_4"/>
<dbReference type="UniPathway" id="UPA00035">
    <property type="reaction ID" value="UER00043"/>
</dbReference>
<dbReference type="Proteomes" id="UP000001436">
    <property type="component" value="Plasmid megaplasmid Rsp"/>
</dbReference>
<dbReference type="GO" id="GO:0004425">
    <property type="term" value="F:indole-3-glycerol-phosphate synthase activity"/>
    <property type="evidence" value="ECO:0007669"/>
    <property type="project" value="UniProtKB-UniRule"/>
</dbReference>
<dbReference type="GO" id="GO:0004640">
    <property type="term" value="F:phosphoribosylanthranilate isomerase activity"/>
    <property type="evidence" value="ECO:0007669"/>
    <property type="project" value="TreeGrafter"/>
</dbReference>
<dbReference type="GO" id="GO:0000162">
    <property type="term" value="P:L-tryptophan biosynthetic process"/>
    <property type="evidence" value="ECO:0007669"/>
    <property type="project" value="UniProtKB-UniRule"/>
</dbReference>
<dbReference type="CDD" id="cd00331">
    <property type="entry name" value="IGPS"/>
    <property type="match status" value="1"/>
</dbReference>
<dbReference type="FunFam" id="3.20.20.70:FF:000024">
    <property type="entry name" value="Indole-3-glycerol phosphate synthase"/>
    <property type="match status" value="1"/>
</dbReference>
<dbReference type="Gene3D" id="3.20.20.70">
    <property type="entry name" value="Aldolase class I"/>
    <property type="match status" value="1"/>
</dbReference>
<dbReference type="HAMAP" id="MF_00134_B">
    <property type="entry name" value="IGPS_B"/>
    <property type="match status" value="1"/>
</dbReference>
<dbReference type="InterPro" id="IPR013785">
    <property type="entry name" value="Aldolase_TIM"/>
</dbReference>
<dbReference type="InterPro" id="IPR045186">
    <property type="entry name" value="Indole-3-glycerol_P_synth"/>
</dbReference>
<dbReference type="InterPro" id="IPR013798">
    <property type="entry name" value="Indole-3-glycerol_P_synth_dom"/>
</dbReference>
<dbReference type="InterPro" id="IPR001468">
    <property type="entry name" value="Indole-3-GlycerolPSynthase_CS"/>
</dbReference>
<dbReference type="InterPro" id="IPR011060">
    <property type="entry name" value="RibuloseP-bd_barrel"/>
</dbReference>
<dbReference type="NCBIfam" id="NF001373">
    <property type="entry name" value="PRK00278.1-6"/>
    <property type="match status" value="1"/>
</dbReference>
<dbReference type="NCBIfam" id="NF001377">
    <property type="entry name" value="PRK00278.2-4"/>
    <property type="match status" value="1"/>
</dbReference>
<dbReference type="PANTHER" id="PTHR22854:SF2">
    <property type="entry name" value="INDOLE-3-GLYCEROL-PHOSPHATE SYNTHASE"/>
    <property type="match status" value="1"/>
</dbReference>
<dbReference type="PANTHER" id="PTHR22854">
    <property type="entry name" value="TRYPTOPHAN BIOSYNTHESIS PROTEIN"/>
    <property type="match status" value="1"/>
</dbReference>
<dbReference type="Pfam" id="PF00218">
    <property type="entry name" value="IGPS"/>
    <property type="match status" value="1"/>
</dbReference>
<dbReference type="SUPFAM" id="SSF51366">
    <property type="entry name" value="Ribulose-phoshate binding barrel"/>
    <property type="match status" value="1"/>
</dbReference>
<dbReference type="PROSITE" id="PS00614">
    <property type="entry name" value="IGPS"/>
    <property type="match status" value="1"/>
</dbReference>
<gene>
    <name type="primary">trpC2</name>
    <name type="ordered locus">RSp0680</name>
    <name type="ORF">RS01769</name>
</gene>
<proteinExistence type="inferred from homology"/>
<comment type="catalytic activity">
    <reaction>
        <text>1-(2-carboxyphenylamino)-1-deoxy-D-ribulose 5-phosphate + H(+) = (1S,2R)-1-C-(indol-3-yl)glycerol 3-phosphate + CO2 + H2O</text>
        <dbReference type="Rhea" id="RHEA:23476"/>
        <dbReference type="ChEBI" id="CHEBI:15377"/>
        <dbReference type="ChEBI" id="CHEBI:15378"/>
        <dbReference type="ChEBI" id="CHEBI:16526"/>
        <dbReference type="ChEBI" id="CHEBI:58613"/>
        <dbReference type="ChEBI" id="CHEBI:58866"/>
        <dbReference type="EC" id="4.1.1.48"/>
    </reaction>
</comment>
<comment type="pathway">
    <text>Amino-acid biosynthesis; L-tryptophan biosynthesis; L-tryptophan from chorismate: step 4/5.</text>
</comment>
<comment type="similarity">
    <text evidence="1">Belongs to the TrpC family.</text>
</comment>
<feature type="chain" id="PRO_0000154243" description="Indole-3-glycerol phosphate synthase 2">
    <location>
        <begin position="1"/>
        <end position="268"/>
    </location>
</feature>
<organism>
    <name type="scientific">Ralstonia nicotianae (strain ATCC BAA-1114 / GMI1000)</name>
    <name type="common">Ralstonia solanacearum</name>
    <dbReference type="NCBI Taxonomy" id="267608"/>
    <lineage>
        <taxon>Bacteria</taxon>
        <taxon>Pseudomonadati</taxon>
        <taxon>Pseudomonadota</taxon>
        <taxon>Betaproteobacteria</taxon>
        <taxon>Burkholderiales</taxon>
        <taxon>Burkholderiaceae</taxon>
        <taxon>Ralstonia</taxon>
        <taxon>Ralstonia solanacearum species complex</taxon>
    </lineage>
</organism>
<reference key="1">
    <citation type="journal article" date="2002" name="Nature">
        <title>Genome sequence of the plant pathogen Ralstonia solanacearum.</title>
        <authorList>
            <person name="Salanoubat M."/>
            <person name="Genin S."/>
            <person name="Artiguenave F."/>
            <person name="Gouzy J."/>
            <person name="Mangenot S."/>
            <person name="Arlat M."/>
            <person name="Billault A."/>
            <person name="Brottier P."/>
            <person name="Camus J.-C."/>
            <person name="Cattolico L."/>
            <person name="Chandler M."/>
            <person name="Choisne N."/>
            <person name="Claudel-Renard C."/>
            <person name="Cunnac S."/>
            <person name="Demange N."/>
            <person name="Gaspin C."/>
            <person name="Lavie M."/>
            <person name="Moisan A."/>
            <person name="Robert C."/>
            <person name="Saurin W."/>
            <person name="Schiex T."/>
            <person name="Siguier P."/>
            <person name="Thebault P."/>
            <person name="Whalen M."/>
            <person name="Wincker P."/>
            <person name="Levy M."/>
            <person name="Weissenbach J."/>
            <person name="Boucher C.A."/>
        </authorList>
    </citation>
    <scope>NUCLEOTIDE SEQUENCE [LARGE SCALE GENOMIC DNA]</scope>
    <source>
        <strain>ATCC BAA-1114 / GMI1000</strain>
    </source>
</reference>
<sequence>MGILDAIKLGKEKEVAHAKTVRKLSGLEQAIKQRPPPRDFVGAVAERAGNGTVALIAEIKKASPSKGLIRSDFQVAAIAEAYRDGGAACLSVLTDQTFFQGKPADLELAKAVSGLPVLRKDFMIDPYQVHEARAMGADAILLILAMLDHGQAIELEAAAQAMGMGVLIEIHDEPELERAMAMQSRLIGINNRDLATFAADLTTSERLASKVDRNRIVISESGIGGHGDVIRLMEAGINGFLIGEQLLRARHIESATREIAQARLHACP</sequence>
<accession>Q8XS01</accession>